<comment type="function">
    <text evidence="1">Multidrug resistance efflux protein.</text>
</comment>
<comment type="subcellular location">
    <subcellularLocation>
        <location evidence="3">Cell membrane</location>
        <topology evidence="3">Multi-pass membrane protein</topology>
    </subcellularLocation>
</comment>
<comment type="similarity">
    <text evidence="3">Belongs to the multi antimicrobial extrusion (MATE) (TC 2.A.66.1) family. MepA subfamily.</text>
</comment>
<gene>
    <name type="primary">mepA</name>
    <name type="ordered locus">SSP2140</name>
</gene>
<organism>
    <name type="scientific">Staphylococcus saprophyticus subsp. saprophyticus (strain ATCC 15305 / DSM 20229 / NCIMB 8711 / NCTC 7292 / S-41)</name>
    <dbReference type="NCBI Taxonomy" id="342451"/>
    <lineage>
        <taxon>Bacteria</taxon>
        <taxon>Bacillati</taxon>
        <taxon>Bacillota</taxon>
        <taxon>Bacilli</taxon>
        <taxon>Bacillales</taxon>
        <taxon>Staphylococcaceae</taxon>
        <taxon>Staphylococcus</taxon>
    </lineage>
</organism>
<feature type="chain" id="PRO_0000290237" description="Multidrug export protein MepA">
    <location>
        <begin position="1"/>
        <end position="451"/>
    </location>
</feature>
<feature type="transmembrane region" description="Helical" evidence="2">
    <location>
        <begin position="26"/>
        <end position="46"/>
    </location>
</feature>
<feature type="transmembrane region" description="Helical" evidence="2">
    <location>
        <begin position="54"/>
        <end position="74"/>
    </location>
</feature>
<feature type="transmembrane region" description="Helical" evidence="2">
    <location>
        <begin position="98"/>
        <end position="118"/>
    </location>
</feature>
<feature type="transmembrane region" description="Helical" evidence="2">
    <location>
        <begin position="134"/>
        <end position="154"/>
    </location>
</feature>
<feature type="transmembrane region" description="Helical" evidence="2">
    <location>
        <begin position="162"/>
        <end position="182"/>
    </location>
</feature>
<feature type="transmembrane region" description="Helical" evidence="2">
    <location>
        <begin position="194"/>
        <end position="214"/>
    </location>
</feature>
<feature type="transmembrane region" description="Helical" evidence="2">
    <location>
        <begin position="245"/>
        <end position="265"/>
    </location>
</feature>
<feature type="transmembrane region" description="Helical" evidence="2">
    <location>
        <begin position="282"/>
        <end position="302"/>
    </location>
</feature>
<feature type="transmembrane region" description="Helical" evidence="2">
    <location>
        <begin position="315"/>
        <end position="335"/>
    </location>
</feature>
<feature type="transmembrane region" description="Helical" evidence="2">
    <location>
        <begin position="355"/>
        <end position="375"/>
    </location>
</feature>
<feature type="transmembrane region" description="Helical" evidence="2">
    <location>
        <begin position="397"/>
        <end position="417"/>
    </location>
</feature>
<feature type="transmembrane region" description="Helical" evidence="2">
    <location>
        <begin position="418"/>
        <end position="438"/>
    </location>
</feature>
<sequence>MKDEQLYYFEKSSVFKGMMHFSVPMMIGSLLSVIYGILNIYFIGFLGDSHMISAISLTLPIFAVLMGLGNLFGIGGGTYISRLLGAKDYVKTKFVSSFSIYGGLILGVIVILMTIFATEQIAHLLGARGETLGFTSAYLKVMFLSAPFVILFFILEQFARSIGAPIISMIGMLASVVLNIILDTILIFGFDLNVVGAALGTAISNVVASLFFIIYFLRKSDIITMSLSYVRPTKEILVEIFKVGFPAFLMSILMGVTGLVLNLFLAGYGNFAIASYGISFRLVQFPELIIMGLCEGVVPLIAYNFMSDKARMKNIIKVVIMTIVVIFAVCMVIVFTTGHQLIGIFSNDAAIVGMATFMLKVTMTSLLLNGIGFLFTGMLQATGQGRGATIMAILQGVVIIPVLFVMNGLFGLTGIVWSLLIAETICALAAMLIVYLLRDRLTVDKAELLEG</sequence>
<evidence type="ECO:0000250" key="1"/>
<evidence type="ECO:0000255" key="2"/>
<evidence type="ECO:0000305" key="3"/>
<dbReference type="EMBL" id="AP008934">
    <property type="protein sequence ID" value="BAE19285.1"/>
    <property type="molecule type" value="Genomic_DNA"/>
</dbReference>
<dbReference type="RefSeq" id="WP_011303776.1">
    <property type="nucleotide sequence ID" value="NC_007350.1"/>
</dbReference>
<dbReference type="SMR" id="Q49VC5"/>
<dbReference type="DNASU" id="3616348"/>
<dbReference type="GeneID" id="3616348"/>
<dbReference type="KEGG" id="ssp:SSP2140"/>
<dbReference type="PATRIC" id="fig|342451.11.peg.2131"/>
<dbReference type="eggNOG" id="COG0534">
    <property type="taxonomic scope" value="Bacteria"/>
</dbReference>
<dbReference type="HOGENOM" id="CLU_012893_0_1_9"/>
<dbReference type="OrthoDB" id="9776324at2"/>
<dbReference type="Proteomes" id="UP000006371">
    <property type="component" value="Chromosome"/>
</dbReference>
<dbReference type="GO" id="GO:0005886">
    <property type="term" value="C:plasma membrane"/>
    <property type="evidence" value="ECO:0007669"/>
    <property type="project" value="UniProtKB-SubCell"/>
</dbReference>
<dbReference type="GO" id="GO:0015297">
    <property type="term" value="F:antiporter activity"/>
    <property type="evidence" value="ECO:0007669"/>
    <property type="project" value="InterPro"/>
</dbReference>
<dbReference type="GO" id="GO:0042910">
    <property type="term" value="F:xenobiotic transmembrane transporter activity"/>
    <property type="evidence" value="ECO:0007669"/>
    <property type="project" value="InterPro"/>
</dbReference>
<dbReference type="GO" id="GO:0046677">
    <property type="term" value="P:response to antibiotic"/>
    <property type="evidence" value="ECO:0007669"/>
    <property type="project" value="UniProtKB-KW"/>
</dbReference>
<dbReference type="CDD" id="cd13143">
    <property type="entry name" value="MATE_MepA_like"/>
    <property type="match status" value="1"/>
</dbReference>
<dbReference type="InterPro" id="IPR002528">
    <property type="entry name" value="MATE_fam"/>
</dbReference>
<dbReference type="InterPro" id="IPR045070">
    <property type="entry name" value="MATE_MepA-like"/>
</dbReference>
<dbReference type="InterPro" id="IPR051327">
    <property type="entry name" value="MATE_MepA_subfamily"/>
</dbReference>
<dbReference type="InterPro" id="IPR048279">
    <property type="entry name" value="MdtK-like"/>
</dbReference>
<dbReference type="NCBIfam" id="TIGR00797">
    <property type="entry name" value="matE"/>
    <property type="match status" value="1"/>
</dbReference>
<dbReference type="PANTHER" id="PTHR43823:SF3">
    <property type="entry name" value="MULTIDRUG EXPORT PROTEIN MEPA"/>
    <property type="match status" value="1"/>
</dbReference>
<dbReference type="PANTHER" id="PTHR43823">
    <property type="entry name" value="SPORULATION PROTEIN YKVU"/>
    <property type="match status" value="1"/>
</dbReference>
<dbReference type="Pfam" id="PF01554">
    <property type="entry name" value="MatE"/>
    <property type="match status" value="2"/>
</dbReference>
<dbReference type="PIRSF" id="PIRSF006603">
    <property type="entry name" value="DinF"/>
    <property type="match status" value="1"/>
</dbReference>
<name>MEPA_STAS1</name>
<keyword id="KW-0046">Antibiotic resistance</keyword>
<keyword id="KW-1003">Cell membrane</keyword>
<keyword id="KW-0472">Membrane</keyword>
<keyword id="KW-1185">Reference proteome</keyword>
<keyword id="KW-0812">Transmembrane</keyword>
<keyword id="KW-1133">Transmembrane helix</keyword>
<keyword id="KW-0813">Transport</keyword>
<accession>Q49VC5</accession>
<reference key="1">
    <citation type="journal article" date="2005" name="Proc. Natl. Acad. Sci. U.S.A.">
        <title>Whole genome sequence of Staphylococcus saprophyticus reveals the pathogenesis of uncomplicated urinary tract infection.</title>
        <authorList>
            <person name="Kuroda M."/>
            <person name="Yamashita A."/>
            <person name="Hirakawa H."/>
            <person name="Kumano M."/>
            <person name="Morikawa K."/>
            <person name="Higashide M."/>
            <person name="Maruyama A."/>
            <person name="Inose Y."/>
            <person name="Matoba K."/>
            <person name="Toh H."/>
            <person name="Kuhara S."/>
            <person name="Hattori M."/>
            <person name="Ohta T."/>
        </authorList>
    </citation>
    <scope>NUCLEOTIDE SEQUENCE [LARGE SCALE GENOMIC DNA]</scope>
    <source>
        <strain>ATCC 15305 / DSM 20229 / NCIMB 8711 / NCTC 7292 / S-41</strain>
    </source>
</reference>
<protein>
    <recommendedName>
        <fullName>Multidrug export protein MepA</fullName>
    </recommendedName>
</protein>
<proteinExistence type="inferred from homology"/>